<keyword id="KW-0408">Iron</keyword>
<feature type="chain" id="PRO_1000083084" description="Probable Fe(2+)-trafficking protein">
    <location>
        <begin position="1"/>
        <end position="92"/>
    </location>
</feature>
<sequence length="92" mass="10840">MARTVNCVYLNKEADGLDFQLYPGDLGKRIFDNISKEAWGLWQKKQTMLINEKKLNMMNVDDRKFLEEQMTSFLFEGKEVEIEGFVPEKDQD</sequence>
<comment type="function">
    <text evidence="1">Could be a mediator in iron transactions between iron acquisition and iron-requiring processes, such as synthesis and/or repair of Fe-S clusters in biosynthetic enzymes.</text>
</comment>
<comment type="similarity">
    <text evidence="1">Belongs to the Fe(2+)-trafficking protein family.</text>
</comment>
<name>FETP_SHEB9</name>
<organism>
    <name type="scientific">Shewanella baltica (strain OS195)</name>
    <dbReference type="NCBI Taxonomy" id="399599"/>
    <lineage>
        <taxon>Bacteria</taxon>
        <taxon>Pseudomonadati</taxon>
        <taxon>Pseudomonadota</taxon>
        <taxon>Gammaproteobacteria</taxon>
        <taxon>Alteromonadales</taxon>
        <taxon>Shewanellaceae</taxon>
        <taxon>Shewanella</taxon>
    </lineage>
</organism>
<reference key="1">
    <citation type="submission" date="2007-11" db="EMBL/GenBank/DDBJ databases">
        <title>Complete sequence of chromosome of Shewanella baltica OS195.</title>
        <authorList>
            <consortium name="US DOE Joint Genome Institute"/>
            <person name="Copeland A."/>
            <person name="Lucas S."/>
            <person name="Lapidus A."/>
            <person name="Barry K."/>
            <person name="Glavina del Rio T."/>
            <person name="Dalin E."/>
            <person name="Tice H."/>
            <person name="Pitluck S."/>
            <person name="Chain P."/>
            <person name="Malfatti S."/>
            <person name="Shin M."/>
            <person name="Vergez L."/>
            <person name="Schmutz J."/>
            <person name="Larimer F."/>
            <person name="Land M."/>
            <person name="Hauser L."/>
            <person name="Kyrpides N."/>
            <person name="Kim E."/>
            <person name="Brettar I."/>
            <person name="Rodrigues J."/>
            <person name="Konstantinidis K."/>
            <person name="Klappenbach J."/>
            <person name="Hofle M."/>
            <person name="Tiedje J."/>
            <person name="Richardson P."/>
        </authorList>
    </citation>
    <scope>NUCLEOTIDE SEQUENCE [LARGE SCALE GENOMIC DNA]</scope>
    <source>
        <strain>OS195</strain>
    </source>
</reference>
<evidence type="ECO:0000255" key="1">
    <source>
        <dbReference type="HAMAP-Rule" id="MF_00686"/>
    </source>
</evidence>
<protein>
    <recommendedName>
        <fullName evidence="1">Probable Fe(2+)-trafficking protein</fullName>
    </recommendedName>
</protein>
<gene>
    <name type="ordered locus">Sbal195_3197</name>
</gene>
<dbReference type="EMBL" id="CP000891">
    <property type="protein sequence ID" value="ABX50359.1"/>
    <property type="molecule type" value="Genomic_DNA"/>
</dbReference>
<dbReference type="RefSeq" id="WP_006082532.1">
    <property type="nucleotide sequence ID" value="NC_009997.1"/>
</dbReference>
<dbReference type="SMR" id="A9KXQ7"/>
<dbReference type="KEGG" id="sbn:Sbal195_3197"/>
<dbReference type="HOGENOM" id="CLU_170994_0_0_6"/>
<dbReference type="Proteomes" id="UP000000770">
    <property type="component" value="Chromosome"/>
</dbReference>
<dbReference type="GO" id="GO:0005829">
    <property type="term" value="C:cytosol"/>
    <property type="evidence" value="ECO:0007669"/>
    <property type="project" value="TreeGrafter"/>
</dbReference>
<dbReference type="GO" id="GO:0005506">
    <property type="term" value="F:iron ion binding"/>
    <property type="evidence" value="ECO:0007669"/>
    <property type="project" value="UniProtKB-UniRule"/>
</dbReference>
<dbReference type="GO" id="GO:0034599">
    <property type="term" value="P:cellular response to oxidative stress"/>
    <property type="evidence" value="ECO:0007669"/>
    <property type="project" value="TreeGrafter"/>
</dbReference>
<dbReference type="FunFam" id="1.10.3880.10:FF:000001">
    <property type="entry name" value="Probable Fe(2+)-trafficking protein"/>
    <property type="match status" value="1"/>
</dbReference>
<dbReference type="Gene3D" id="1.10.3880.10">
    <property type="entry name" value="Fe(II) trafficking protein YggX"/>
    <property type="match status" value="1"/>
</dbReference>
<dbReference type="HAMAP" id="MF_00686">
    <property type="entry name" value="Fe_traffic_YggX"/>
    <property type="match status" value="1"/>
</dbReference>
<dbReference type="InterPro" id="IPR007457">
    <property type="entry name" value="Fe_traffick_prot_YggX"/>
</dbReference>
<dbReference type="InterPro" id="IPR036766">
    <property type="entry name" value="Fe_traffick_prot_YggX_sf"/>
</dbReference>
<dbReference type="NCBIfam" id="NF003817">
    <property type="entry name" value="PRK05408.1"/>
    <property type="match status" value="1"/>
</dbReference>
<dbReference type="PANTHER" id="PTHR36965">
    <property type="entry name" value="FE(2+)-TRAFFICKING PROTEIN-RELATED"/>
    <property type="match status" value="1"/>
</dbReference>
<dbReference type="PANTHER" id="PTHR36965:SF1">
    <property type="entry name" value="FE(2+)-TRAFFICKING PROTEIN-RELATED"/>
    <property type="match status" value="1"/>
</dbReference>
<dbReference type="Pfam" id="PF04362">
    <property type="entry name" value="Iron_traffic"/>
    <property type="match status" value="1"/>
</dbReference>
<dbReference type="PIRSF" id="PIRSF029827">
    <property type="entry name" value="Fe_traffic_YggX"/>
    <property type="match status" value="1"/>
</dbReference>
<dbReference type="SUPFAM" id="SSF111148">
    <property type="entry name" value="YggX-like"/>
    <property type="match status" value="1"/>
</dbReference>
<proteinExistence type="inferred from homology"/>
<accession>A9KXQ7</accession>